<gene>
    <name type="primary">rps7</name>
    <name type="ordered locus">OtCpg00240</name>
</gene>
<evidence type="ECO:0000250" key="1"/>
<evidence type="ECO:0000305" key="2"/>
<protein>
    <recommendedName>
        <fullName evidence="2">Small ribosomal subunit protein uS7c</fullName>
    </recommendedName>
    <alternativeName>
        <fullName>30S ribosomal protein S7, chloroplastic</fullName>
    </alternativeName>
</protein>
<feature type="chain" id="PRO_0000277049" description="Small ribosomal subunit protein uS7c">
    <location>
        <begin position="1"/>
        <end position="156"/>
    </location>
</feature>
<keyword id="KW-0150">Chloroplast</keyword>
<keyword id="KW-0934">Plastid</keyword>
<keyword id="KW-1185">Reference proteome</keyword>
<keyword id="KW-0687">Ribonucleoprotein</keyword>
<keyword id="KW-0689">Ribosomal protein</keyword>
<keyword id="KW-0694">RNA-binding</keyword>
<keyword id="KW-0699">rRNA-binding</keyword>
<sequence length="156" mass="17406">MSRRTVAKKRPVAPDPVYQSRLVSLLVSHLLKKGKKSIAYNIFYAAMKNIAETTSQDPLEVLRQAVLNITPKVEVKSRRVGGATLQVPLEVKADRGTALALRWLLIAARNRSGRNMVSKLSAEIIDASNNTGAAIRRREETHRMAEANKAFAHFRF</sequence>
<name>RR7_OSTTA</name>
<organism>
    <name type="scientific">Ostreococcus tauri</name>
    <dbReference type="NCBI Taxonomy" id="70448"/>
    <lineage>
        <taxon>Eukaryota</taxon>
        <taxon>Viridiplantae</taxon>
        <taxon>Chlorophyta</taxon>
        <taxon>Mamiellophyceae</taxon>
        <taxon>Mamiellales</taxon>
        <taxon>Bathycoccaceae</taxon>
        <taxon>Ostreococcus</taxon>
    </lineage>
</organism>
<geneLocation type="chloroplast"/>
<comment type="function">
    <text evidence="1">One of the primary rRNA binding proteins, it binds directly to 16S rRNA where it nucleates assembly of the head domain of the 30S subunit.</text>
</comment>
<comment type="subunit">
    <text>Part of the 30S ribosomal subunit.</text>
</comment>
<comment type="subcellular location">
    <subcellularLocation>
        <location>Plastid</location>
        <location>Chloroplast</location>
    </subcellularLocation>
</comment>
<comment type="similarity">
    <text evidence="2">Belongs to the universal ribosomal protein uS7 family.</text>
</comment>
<accession>Q0P3M8</accession>
<dbReference type="EMBL" id="CR954199">
    <property type="protein sequence ID" value="CAL36349.1"/>
    <property type="molecule type" value="Genomic_DNA"/>
</dbReference>
<dbReference type="RefSeq" id="YP_717227.1">
    <property type="nucleotide sequence ID" value="NC_008289.1"/>
</dbReference>
<dbReference type="SMR" id="Q0P3M8"/>
<dbReference type="FunCoup" id="Q0P3M8">
    <property type="interactions" value="1017"/>
</dbReference>
<dbReference type="STRING" id="70448.Q0P3M8"/>
<dbReference type="GeneID" id="4238845"/>
<dbReference type="KEGG" id="ota:OstapCp24"/>
<dbReference type="eggNOG" id="KOG3291">
    <property type="taxonomic scope" value="Eukaryota"/>
</dbReference>
<dbReference type="InParanoid" id="Q0P3M8"/>
<dbReference type="Proteomes" id="UP000009170">
    <property type="component" value="Chloroplast"/>
</dbReference>
<dbReference type="GO" id="GO:0009507">
    <property type="term" value="C:chloroplast"/>
    <property type="evidence" value="ECO:0007669"/>
    <property type="project" value="UniProtKB-SubCell"/>
</dbReference>
<dbReference type="GO" id="GO:0015935">
    <property type="term" value="C:small ribosomal subunit"/>
    <property type="evidence" value="ECO:0007669"/>
    <property type="project" value="InterPro"/>
</dbReference>
<dbReference type="GO" id="GO:0019843">
    <property type="term" value="F:rRNA binding"/>
    <property type="evidence" value="ECO:0007669"/>
    <property type="project" value="UniProtKB-UniRule"/>
</dbReference>
<dbReference type="GO" id="GO:0003735">
    <property type="term" value="F:structural constituent of ribosome"/>
    <property type="evidence" value="ECO:0007669"/>
    <property type="project" value="InterPro"/>
</dbReference>
<dbReference type="GO" id="GO:0006412">
    <property type="term" value="P:translation"/>
    <property type="evidence" value="ECO:0007669"/>
    <property type="project" value="UniProtKB-UniRule"/>
</dbReference>
<dbReference type="CDD" id="cd14871">
    <property type="entry name" value="uS7_Chloroplast"/>
    <property type="match status" value="1"/>
</dbReference>
<dbReference type="FunFam" id="1.10.455.10:FF:000001">
    <property type="entry name" value="30S ribosomal protein S7"/>
    <property type="match status" value="1"/>
</dbReference>
<dbReference type="Gene3D" id="1.10.455.10">
    <property type="entry name" value="Ribosomal protein S7 domain"/>
    <property type="match status" value="1"/>
</dbReference>
<dbReference type="HAMAP" id="MF_00480_B">
    <property type="entry name" value="Ribosomal_uS7_B"/>
    <property type="match status" value="1"/>
</dbReference>
<dbReference type="InterPro" id="IPR000235">
    <property type="entry name" value="Ribosomal_uS7"/>
</dbReference>
<dbReference type="InterPro" id="IPR005717">
    <property type="entry name" value="Ribosomal_uS7_bac/org-type"/>
</dbReference>
<dbReference type="InterPro" id="IPR020606">
    <property type="entry name" value="Ribosomal_uS7_CS"/>
</dbReference>
<dbReference type="InterPro" id="IPR023798">
    <property type="entry name" value="Ribosomal_uS7_dom"/>
</dbReference>
<dbReference type="InterPro" id="IPR036823">
    <property type="entry name" value="Ribosomal_uS7_dom_sf"/>
</dbReference>
<dbReference type="NCBIfam" id="TIGR01029">
    <property type="entry name" value="rpsG_bact"/>
    <property type="match status" value="1"/>
</dbReference>
<dbReference type="PANTHER" id="PTHR11205">
    <property type="entry name" value="RIBOSOMAL PROTEIN S7"/>
    <property type="match status" value="1"/>
</dbReference>
<dbReference type="Pfam" id="PF00177">
    <property type="entry name" value="Ribosomal_S7"/>
    <property type="match status" value="1"/>
</dbReference>
<dbReference type="PIRSF" id="PIRSF002122">
    <property type="entry name" value="RPS7p_RPS7a_RPS5e_RPS7o"/>
    <property type="match status" value="1"/>
</dbReference>
<dbReference type="SUPFAM" id="SSF47973">
    <property type="entry name" value="Ribosomal protein S7"/>
    <property type="match status" value="1"/>
</dbReference>
<dbReference type="PROSITE" id="PS00052">
    <property type="entry name" value="RIBOSOMAL_S7"/>
    <property type="match status" value="1"/>
</dbReference>
<proteinExistence type="inferred from homology"/>
<reference key="1">
    <citation type="journal article" date="2007" name="Mol. Biol. Evol.">
        <title>The complete chloroplast and mitochondrial DNA sequence of Ostreococcus tauri: organelle genomes of the smallest eukaryote are examples of compaction.</title>
        <authorList>
            <person name="Robbens S."/>
            <person name="Derelle E."/>
            <person name="Ferraz C."/>
            <person name="Wuyts J."/>
            <person name="Moreau H."/>
            <person name="Van de Peer Y."/>
        </authorList>
    </citation>
    <scope>NUCLEOTIDE SEQUENCE [LARGE SCALE GENOMIC DNA]</scope>
    <source>
        <strain>OTTH0595</strain>
    </source>
</reference>